<reference key="1">
    <citation type="journal article" date="2003" name="Science">
        <title>Genome of Geobacter sulfurreducens: metal reduction in subsurface environments.</title>
        <authorList>
            <person name="Methe B.A."/>
            <person name="Nelson K.E."/>
            <person name="Eisen J.A."/>
            <person name="Paulsen I.T."/>
            <person name="Nelson W.C."/>
            <person name="Heidelberg J.F."/>
            <person name="Wu D."/>
            <person name="Wu M."/>
            <person name="Ward N.L."/>
            <person name="Beanan M.J."/>
            <person name="Dodson R.J."/>
            <person name="Madupu R."/>
            <person name="Brinkac L.M."/>
            <person name="Daugherty S.C."/>
            <person name="DeBoy R.T."/>
            <person name="Durkin A.S."/>
            <person name="Gwinn M.L."/>
            <person name="Kolonay J.F."/>
            <person name="Sullivan S.A."/>
            <person name="Haft D.H."/>
            <person name="Selengut J."/>
            <person name="Davidsen T.M."/>
            <person name="Zafar N."/>
            <person name="White O."/>
            <person name="Tran B."/>
            <person name="Romero C."/>
            <person name="Forberger H.A."/>
            <person name="Weidman J.F."/>
            <person name="Khouri H.M."/>
            <person name="Feldblyum T.V."/>
            <person name="Utterback T.R."/>
            <person name="Van Aken S.E."/>
            <person name="Lovley D.R."/>
            <person name="Fraser C.M."/>
        </authorList>
    </citation>
    <scope>NUCLEOTIDE SEQUENCE [LARGE SCALE GENOMIC DNA]</scope>
    <source>
        <strain>ATCC 51573 / DSM 12127 / PCA</strain>
    </source>
</reference>
<keyword id="KW-0963">Cytoplasm</keyword>
<keyword id="KW-0342">GTP-binding</keyword>
<keyword id="KW-0378">Hydrolase</keyword>
<keyword id="KW-0460">Magnesium</keyword>
<keyword id="KW-0479">Metal-binding</keyword>
<keyword id="KW-0547">Nucleotide-binding</keyword>
<keyword id="KW-1185">Reference proteome</keyword>
<dbReference type="EC" id="3.6.5.-" evidence="1"/>
<dbReference type="EMBL" id="AE017180">
    <property type="protein sequence ID" value="AAR36604.1"/>
    <property type="molecule type" value="Genomic_DNA"/>
</dbReference>
<dbReference type="RefSeq" id="NP_954254.1">
    <property type="nucleotide sequence ID" value="NC_002939.5"/>
</dbReference>
<dbReference type="SMR" id="Q747Q2"/>
<dbReference type="FunCoup" id="Q747Q2">
    <property type="interactions" value="531"/>
</dbReference>
<dbReference type="STRING" id="243231.GSU3213"/>
<dbReference type="EnsemblBacteria" id="AAR36604">
    <property type="protein sequence ID" value="AAR36604"/>
    <property type="gene ID" value="GSU3213"/>
</dbReference>
<dbReference type="KEGG" id="gsu:GSU3213"/>
<dbReference type="PATRIC" id="fig|243231.5.peg.3237"/>
<dbReference type="eggNOG" id="COG0536">
    <property type="taxonomic scope" value="Bacteria"/>
</dbReference>
<dbReference type="HOGENOM" id="CLU_011747_2_3_7"/>
<dbReference type="InParanoid" id="Q747Q2"/>
<dbReference type="OrthoDB" id="9807318at2"/>
<dbReference type="Proteomes" id="UP000000577">
    <property type="component" value="Chromosome"/>
</dbReference>
<dbReference type="GO" id="GO:0005737">
    <property type="term" value="C:cytoplasm"/>
    <property type="evidence" value="ECO:0007669"/>
    <property type="project" value="UniProtKB-SubCell"/>
</dbReference>
<dbReference type="GO" id="GO:0005525">
    <property type="term" value="F:GTP binding"/>
    <property type="evidence" value="ECO:0000318"/>
    <property type="project" value="GO_Central"/>
</dbReference>
<dbReference type="GO" id="GO:0003924">
    <property type="term" value="F:GTPase activity"/>
    <property type="evidence" value="ECO:0000318"/>
    <property type="project" value="GO_Central"/>
</dbReference>
<dbReference type="GO" id="GO:0000287">
    <property type="term" value="F:magnesium ion binding"/>
    <property type="evidence" value="ECO:0007669"/>
    <property type="project" value="InterPro"/>
</dbReference>
<dbReference type="GO" id="GO:0042254">
    <property type="term" value="P:ribosome biogenesis"/>
    <property type="evidence" value="ECO:0007669"/>
    <property type="project" value="UniProtKB-UniRule"/>
</dbReference>
<dbReference type="CDD" id="cd01898">
    <property type="entry name" value="Obg"/>
    <property type="match status" value="1"/>
</dbReference>
<dbReference type="FunFam" id="2.70.210.12:FF:000001">
    <property type="entry name" value="GTPase Obg"/>
    <property type="match status" value="1"/>
</dbReference>
<dbReference type="Gene3D" id="2.70.210.12">
    <property type="entry name" value="GTP1/OBG domain"/>
    <property type="match status" value="1"/>
</dbReference>
<dbReference type="Gene3D" id="3.40.50.300">
    <property type="entry name" value="P-loop containing nucleotide triphosphate hydrolases"/>
    <property type="match status" value="1"/>
</dbReference>
<dbReference type="HAMAP" id="MF_01454">
    <property type="entry name" value="GTPase_Obg"/>
    <property type="match status" value="1"/>
</dbReference>
<dbReference type="InterPro" id="IPR031167">
    <property type="entry name" value="G_OBG"/>
</dbReference>
<dbReference type="InterPro" id="IPR006073">
    <property type="entry name" value="GTP-bd"/>
</dbReference>
<dbReference type="InterPro" id="IPR014100">
    <property type="entry name" value="GTP-bd_Obg/CgtA"/>
</dbReference>
<dbReference type="InterPro" id="IPR006074">
    <property type="entry name" value="GTP1-OBG_CS"/>
</dbReference>
<dbReference type="InterPro" id="IPR006169">
    <property type="entry name" value="GTP1_OBG_dom"/>
</dbReference>
<dbReference type="InterPro" id="IPR036726">
    <property type="entry name" value="GTP1_OBG_dom_sf"/>
</dbReference>
<dbReference type="InterPro" id="IPR045086">
    <property type="entry name" value="OBG_GTPase"/>
</dbReference>
<dbReference type="InterPro" id="IPR027417">
    <property type="entry name" value="P-loop_NTPase"/>
</dbReference>
<dbReference type="NCBIfam" id="TIGR02729">
    <property type="entry name" value="Obg_CgtA"/>
    <property type="match status" value="1"/>
</dbReference>
<dbReference type="NCBIfam" id="NF008954">
    <property type="entry name" value="PRK12296.1"/>
    <property type="match status" value="1"/>
</dbReference>
<dbReference type="NCBIfam" id="NF008955">
    <property type="entry name" value="PRK12297.1"/>
    <property type="match status" value="1"/>
</dbReference>
<dbReference type="NCBIfam" id="NF008956">
    <property type="entry name" value="PRK12299.1"/>
    <property type="match status" value="1"/>
</dbReference>
<dbReference type="PANTHER" id="PTHR11702">
    <property type="entry name" value="DEVELOPMENTALLY REGULATED GTP-BINDING PROTEIN-RELATED"/>
    <property type="match status" value="1"/>
</dbReference>
<dbReference type="PANTHER" id="PTHR11702:SF31">
    <property type="entry name" value="MITOCHONDRIAL RIBOSOME-ASSOCIATED GTPASE 2"/>
    <property type="match status" value="1"/>
</dbReference>
<dbReference type="Pfam" id="PF01018">
    <property type="entry name" value="GTP1_OBG"/>
    <property type="match status" value="1"/>
</dbReference>
<dbReference type="Pfam" id="PF01926">
    <property type="entry name" value="MMR_HSR1"/>
    <property type="match status" value="1"/>
</dbReference>
<dbReference type="PIRSF" id="PIRSF002401">
    <property type="entry name" value="GTP_bd_Obg/CgtA"/>
    <property type="match status" value="1"/>
</dbReference>
<dbReference type="PRINTS" id="PR00326">
    <property type="entry name" value="GTP1OBG"/>
</dbReference>
<dbReference type="SUPFAM" id="SSF82051">
    <property type="entry name" value="Obg GTP-binding protein N-terminal domain"/>
    <property type="match status" value="1"/>
</dbReference>
<dbReference type="SUPFAM" id="SSF52540">
    <property type="entry name" value="P-loop containing nucleoside triphosphate hydrolases"/>
    <property type="match status" value="1"/>
</dbReference>
<dbReference type="PROSITE" id="PS51710">
    <property type="entry name" value="G_OBG"/>
    <property type="match status" value="1"/>
</dbReference>
<dbReference type="PROSITE" id="PS00905">
    <property type="entry name" value="GTP1_OBG"/>
    <property type="match status" value="1"/>
</dbReference>
<dbReference type="PROSITE" id="PS51883">
    <property type="entry name" value="OBG"/>
    <property type="match status" value="1"/>
</dbReference>
<organism>
    <name type="scientific">Geobacter sulfurreducens (strain ATCC 51573 / DSM 12127 / PCA)</name>
    <dbReference type="NCBI Taxonomy" id="243231"/>
    <lineage>
        <taxon>Bacteria</taxon>
        <taxon>Pseudomonadati</taxon>
        <taxon>Thermodesulfobacteriota</taxon>
        <taxon>Desulfuromonadia</taxon>
        <taxon>Geobacterales</taxon>
        <taxon>Geobacteraceae</taxon>
        <taxon>Geobacter</taxon>
    </lineage>
</organism>
<gene>
    <name evidence="1" type="primary">obg</name>
    <name type="ordered locus">GSU3213</name>
</gene>
<name>OBG_GEOSL</name>
<accession>Q747Q2</accession>
<feature type="chain" id="PRO_0000385954" description="GTPase Obg">
    <location>
        <begin position="1"/>
        <end position="338"/>
    </location>
</feature>
<feature type="domain" description="Obg" evidence="2">
    <location>
        <begin position="1"/>
        <end position="159"/>
    </location>
</feature>
<feature type="domain" description="OBG-type G" evidence="1">
    <location>
        <begin position="160"/>
        <end position="331"/>
    </location>
</feature>
<feature type="binding site" evidence="1">
    <location>
        <begin position="166"/>
        <end position="173"/>
    </location>
    <ligand>
        <name>GTP</name>
        <dbReference type="ChEBI" id="CHEBI:37565"/>
    </ligand>
</feature>
<feature type="binding site" evidence="1">
    <location>
        <position position="173"/>
    </location>
    <ligand>
        <name>Mg(2+)</name>
        <dbReference type="ChEBI" id="CHEBI:18420"/>
    </ligand>
</feature>
<feature type="binding site" evidence="1">
    <location>
        <begin position="191"/>
        <end position="195"/>
    </location>
    <ligand>
        <name>GTP</name>
        <dbReference type="ChEBI" id="CHEBI:37565"/>
    </ligand>
</feature>
<feature type="binding site" evidence="1">
    <location>
        <position position="193"/>
    </location>
    <ligand>
        <name>Mg(2+)</name>
        <dbReference type="ChEBI" id="CHEBI:18420"/>
    </ligand>
</feature>
<feature type="binding site" evidence="1">
    <location>
        <begin position="213"/>
        <end position="216"/>
    </location>
    <ligand>
        <name>GTP</name>
        <dbReference type="ChEBI" id="CHEBI:37565"/>
    </ligand>
</feature>
<feature type="binding site" evidence="1">
    <location>
        <begin position="283"/>
        <end position="286"/>
    </location>
    <ligand>
        <name>GTP</name>
        <dbReference type="ChEBI" id="CHEBI:37565"/>
    </ligand>
</feature>
<feature type="binding site" evidence="1">
    <location>
        <begin position="312"/>
        <end position="314"/>
    </location>
    <ligand>
        <name>GTP</name>
        <dbReference type="ChEBI" id="CHEBI:37565"/>
    </ligand>
</feature>
<proteinExistence type="inferred from homology"/>
<comment type="function">
    <text evidence="1">An essential GTPase which binds GTP, GDP and possibly (p)ppGpp with moderate affinity, with high nucleotide exchange rates and a fairly low GTP hydrolysis rate. Plays a role in control of the cell cycle, stress response, ribosome biogenesis and in those bacteria that undergo differentiation, in morphogenesis control.</text>
</comment>
<comment type="cofactor">
    <cofactor evidence="1">
        <name>Mg(2+)</name>
        <dbReference type="ChEBI" id="CHEBI:18420"/>
    </cofactor>
</comment>
<comment type="subunit">
    <text evidence="1">Monomer.</text>
</comment>
<comment type="subcellular location">
    <subcellularLocation>
        <location evidence="1">Cytoplasm</location>
    </subcellularLocation>
</comment>
<comment type="similarity">
    <text evidence="1">Belongs to the TRAFAC class OBG-HflX-like GTPase superfamily. OBG GTPase family.</text>
</comment>
<sequence>MQFIDEVKIHVQSGHGGAGCVSFRREKFIPFGGPNGGDGGRGGDVIFRVDSNLSTLLDLRYRPHLKAGSGKNGMGKDRHGAGGEDLVIPVPPGTIIKDAETGEILADLVTAGEEIVLLKGGRGGQGNARFATSTNRAPKFAQPGEPEEQRWLRLELKLLADVGLLGFPNVGKSSFITRVSAARPKIADYPFTTLKPNLGVVPYKNYRSFVIADIPGIIEGASEGAGLGHRFLKHVERTTVLLHVLDLSWMPDRDPIREYEALNRELALFSPELADKRQIVVVNKMDLPAVRENLPAVLPWFRERGLAVFPLSAATGEGISPLLDEIARSLWGKDEEEW</sequence>
<protein>
    <recommendedName>
        <fullName evidence="1">GTPase Obg</fullName>
        <ecNumber evidence="1">3.6.5.-</ecNumber>
    </recommendedName>
    <alternativeName>
        <fullName evidence="1">GTP-binding protein Obg</fullName>
    </alternativeName>
</protein>
<evidence type="ECO:0000255" key="1">
    <source>
        <dbReference type="HAMAP-Rule" id="MF_01454"/>
    </source>
</evidence>
<evidence type="ECO:0000255" key="2">
    <source>
        <dbReference type="PROSITE-ProRule" id="PRU01231"/>
    </source>
</evidence>